<evidence type="ECO:0000255" key="1">
    <source>
        <dbReference type="HAMAP-Rule" id="MF_01022"/>
    </source>
</evidence>
<protein>
    <recommendedName>
        <fullName evidence="1">Histidine biosynthesis bifunctional protein HisB</fullName>
    </recommendedName>
    <domain>
        <recommendedName>
            <fullName evidence="1">Histidinol-phosphatase</fullName>
            <ecNumber evidence="1">3.1.3.15</ecNumber>
        </recommendedName>
    </domain>
    <domain>
        <recommendedName>
            <fullName evidence="1">Imidazoleglycerol-phosphate dehydratase</fullName>
            <shortName evidence="1">IGPD</shortName>
            <ecNumber evidence="1">4.2.1.19</ecNumber>
        </recommendedName>
    </domain>
</protein>
<proteinExistence type="inferred from homology"/>
<organism>
    <name type="scientific">Xanthomonas oryzae pv. oryzae (strain PXO99A)</name>
    <dbReference type="NCBI Taxonomy" id="360094"/>
    <lineage>
        <taxon>Bacteria</taxon>
        <taxon>Pseudomonadati</taxon>
        <taxon>Pseudomonadota</taxon>
        <taxon>Gammaproteobacteria</taxon>
        <taxon>Lysobacterales</taxon>
        <taxon>Lysobacteraceae</taxon>
        <taxon>Xanthomonas</taxon>
    </lineage>
</organism>
<comment type="catalytic activity">
    <reaction evidence="1">
        <text>D-erythro-1-(imidazol-4-yl)glycerol 3-phosphate = 3-(imidazol-4-yl)-2-oxopropyl phosphate + H2O</text>
        <dbReference type="Rhea" id="RHEA:11040"/>
        <dbReference type="ChEBI" id="CHEBI:15377"/>
        <dbReference type="ChEBI" id="CHEBI:57766"/>
        <dbReference type="ChEBI" id="CHEBI:58278"/>
        <dbReference type="EC" id="4.2.1.19"/>
    </reaction>
</comment>
<comment type="catalytic activity">
    <reaction evidence="1">
        <text>L-histidinol phosphate + H2O = L-histidinol + phosphate</text>
        <dbReference type="Rhea" id="RHEA:14465"/>
        <dbReference type="ChEBI" id="CHEBI:15377"/>
        <dbReference type="ChEBI" id="CHEBI:43474"/>
        <dbReference type="ChEBI" id="CHEBI:57699"/>
        <dbReference type="ChEBI" id="CHEBI:57980"/>
        <dbReference type="EC" id="3.1.3.15"/>
    </reaction>
</comment>
<comment type="cofactor">
    <cofactor evidence="1">
        <name>Mg(2+)</name>
        <dbReference type="ChEBI" id="CHEBI:18420"/>
    </cofactor>
</comment>
<comment type="pathway">
    <text evidence="1">Amino-acid biosynthesis; L-histidine biosynthesis; L-histidine from 5-phospho-alpha-D-ribose 1-diphosphate: step 6/9.</text>
</comment>
<comment type="pathway">
    <text evidence="1">Amino-acid biosynthesis; L-histidine biosynthesis; L-histidine from 5-phospho-alpha-D-ribose 1-diphosphate: step 8/9.</text>
</comment>
<comment type="subcellular location">
    <subcellularLocation>
        <location evidence="1">Cytoplasm</location>
    </subcellularLocation>
</comment>
<comment type="similarity">
    <text evidence="1">In the N-terminal section; belongs to the histidinol-phosphatase family.</text>
</comment>
<comment type="similarity">
    <text evidence="1">In the C-terminal section; belongs to the imidazoleglycerol-phosphate dehydratase family.</text>
</comment>
<gene>
    <name evidence="1" type="primary">hisB</name>
    <name type="ordered locus">PXO_00835</name>
</gene>
<feature type="chain" id="PRO_1000135373" description="Histidine biosynthesis bifunctional protein HisB">
    <location>
        <begin position="1"/>
        <end position="375"/>
    </location>
</feature>
<feature type="region of interest" description="Histidinol-phosphatase" evidence="1">
    <location>
        <begin position="1"/>
        <end position="168"/>
    </location>
</feature>
<feature type="region of interest" description="Imidazoleglycerol-phosphate dehydratase" evidence="1">
    <location>
        <begin position="169"/>
        <end position="375"/>
    </location>
</feature>
<feature type="active site" description="Nucleophile" evidence="1">
    <location>
        <position position="8"/>
    </location>
</feature>
<feature type="active site" description="Proton donor" evidence="1">
    <location>
        <position position="10"/>
    </location>
</feature>
<feature type="binding site" evidence="1">
    <location>
        <position position="8"/>
    </location>
    <ligand>
        <name>Mg(2+)</name>
        <dbReference type="ChEBI" id="CHEBI:18420"/>
    </ligand>
</feature>
<feature type="binding site" evidence="1">
    <location>
        <position position="10"/>
    </location>
    <ligand>
        <name>Mg(2+)</name>
        <dbReference type="ChEBI" id="CHEBI:18420"/>
    </ligand>
</feature>
<feature type="binding site" evidence="1">
    <location>
        <position position="128"/>
    </location>
    <ligand>
        <name>Mg(2+)</name>
        <dbReference type="ChEBI" id="CHEBI:18420"/>
    </ligand>
</feature>
<sequence>MTPILFVDRDGTLITEPADYQIDAYEKLRFVDHVIPAMLKLRDAGYQFVIVSNQDGLGSESFPRASFDGPNNLMLQIFASQGIEFREVLIDCSWPSDNAPTRKPGVGLMVPYLQDRTIDWARSAMVGDRITDIQFAQNLNIRGFQLRTDEFGGEWDWPGIAHELADAPRRAVVQRNTKETRIRVELDLDRVAEPKTATGLPFFDHMLEQIGKHGGFALDIRAEGDLHIDEHHTIEDTGLALGQALREALGDKRGIGRYGFDPESSPWQVAGDTAQHGFTLPMDETIASAALDFSGRPYFVFDGQFKRDRLGDMPTELVPHFFRSICDASGVNLHLTVRGENDHHKVEACFKALARALRQAIRREGSALPTTKGAL</sequence>
<accession>B2SKN6</accession>
<dbReference type="EC" id="3.1.3.15" evidence="1"/>
<dbReference type="EC" id="4.2.1.19" evidence="1"/>
<dbReference type="EMBL" id="CP000967">
    <property type="protein sequence ID" value="ACD58958.1"/>
    <property type="molecule type" value="Genomic_DNA"/>
</dbReference>
<dbReference type="RefSeq" id="WP_011258944.1">
    <property type="nucleotide sequence ID" value="NC_010717.2"/>
</dbReference>
<dbReference type="SMR" id="B2SKN6"/>
<dbReference type="KEGG" id="xop:PXO_00835"/>
<dbReference type="eggNOG" id="COG0131">
    <property type="taxonomic scope" value="Bacteria"/>
</dbReference>
<dbReference type="eggNOG" id="COG0241">
    <property type="taxonomic scope" value="Bacteria"/>
</dbReference>
<dbReference type="HOGENOM" id="CLU_044308_0_0_6"/>
<dbReference type="UniPathway" id="UPA00031">
    <property type="reaction ID" value="UER00011"/>
</dbReference>
<dbReference type="UniPathway" id="UPA00031">
    <property type="reaction ID" value="UER00013"/>
</dbReference>
<dbReference type="Proteomes" id="UP000001740">
    <property type="component" value="Chromosome"/>
</dbReference>
<dbReference type="GO" id="GO:0005737">
    <property type="term" value="C:cytoplasm"/>
    <property type="evidence" value="ECO:0007669"/>
    <property type="project" value="UniProtKB-SubCell"/>
</dbReference>
<dbReference type="GO" id="GO:0004401">
    <property type="term" value="F:histidinol-phosphatase activity"/>
    <property type="evidence" value="ECO:0007669"/>
    <property type="project" value="UniProtKB-UniRule"/>
</dbReference>
<dbReference type="GO" id="GO:0004424">
    <property type="term" value="F:imidazoleglycerol-phosphate dehydratase activity"/>
    <property type="evidence" value="ECO:0007669"/>
    <property type="project" value="UniProtKB-UniRule"/>
</dbReference>
<dbReference type="GO" id="GO:0046872">
    <property type="term" value="F:metal ion binding"/>
    <property type="evidence" value="ECO:0007669"/>
    <property type="project" value="UniProtKB-KW"/>
</dbReference>
<dbReference type="GO" id="GO:0000105">
    <property type="term" value="P:L-histidine biosynthetic process"/>
    <property type="evidence" value="ECO:0007669"/>
    <property type="project" value="UniProtKB-UniRule"/>
</dbReference>
<dbReference type="CDD" id="cd07914">
    <property type="entry name" value="IGPD"/>
    <property type="match status" value="1"/>
</dbReference>
<dbReference type="FunFam" id="3.40.50.1000:FF:000061">
    <property type="entry name" value="Histidine biosynthesis bifunctional protein HisB"/>
    <property type="match status" value="1"/>
</dbReference>
<dbReference type="FunFam" id="3.30.230.40:FF:000001">
    <property type="entry name" value="Imidazoleglycerol-phosphate dehydratase HisB"/>
    <property type="match status" value="1"/>
</dbReference>
<dbReference type="FunFam" id="3.30.230.40:FF:000003">
    <property type="entry name" value="Imidazoleglycerol-phosphate dehydratase HisB"/>
    <property type="match status" value="1"/>
</dbReference>
<dbReference type="Gene3D" id="3.40.50.1000">
    <property type="entry name" value="HAD superfamily/HAD-like"/>
    <property type="match status" value="1"/>
</dbReference>
<dbReference type="Gene3D" id="3.30.230.40">
    <property type="entry name" value="Imidazole glycerol phosphate dehydratase, domain 1"/>
    <property type="match status" value="2"/>
</dbReference>
<dbReference type="HAMAP" id="MF_01022">
    <property type="entry name" value="Bifunc_HisB"/>
    <property type="match status" value="1"/>
</dbReference>
<dbReference type="HAMAP" id="MF_00076">
    <property type="entry name" value="HisB"/>
    <property type="match status" value="1"/>
</dbReference>
<dbReference type="InterPro" id="IPR036412">
    <property type="entry name" value="HAD-like_sf"/>
</dbReference>
<dbReference type="InterPro" id="IPR006549">
    <property type="entry name" value="HAD-SF_hydro_IIIA"/>
</dbReference>
<dbReference type="InterPro" id="IPR023214">
    <property type="entry name" value="HAD_sf"/>
</dbReference>
<dbReference type="InterPro" id="IPR020566">
    <property type="entry name" value="His_synth_bifunc_HisB"/>
</dbReference>
<dbReference type="InterPro" id="IPR005954">
    <property type="entry name" value="HisB_N"/>
</dbReference>
<dbReference type="InterPro" id="IPR006543">
    <property type="entry name" value="Histidinol-phos"/>
</dbReference>
<dbReference type="InterPro" id="IPR038494">
    <property type="entry name" value="IGPD_sf"/>
</dbReference>
<dbReference type="InterPro" id="IPR000807">
    <property type="entry name" value="ImidazoleglycerolP_deHydtase"/>
</dbReference>
<dbReference type="InterPro" id="IPR020565">
    <property type="entry name" value="ImidazoleglycerP_deHydtase_CS"/>
</dbReference>
<dbReference type="InterPro" id="IPR020568">
    <property type="entry name" value="Ribosomal_Su5_D2-typ_SF"/>
</dbReference>
<dbReference type="NCBIfam" id="TIGR01662">
    <property type="entry name" value="HAD-SF-IIIA"/>
    <property type="match status" value="1"/>
</dbReference>
<dbReference type="NCBIfam" id="TIGR01261">
    <property type="entry name" value="hisB_Nterm"/>
    <property type="match status" value="1"/>
</dbReference>
<dbReference type="NCBIfam" id="TIGR01656">
    <property type="entry name" value="Histidinol-ppas"/>
    <property type="match status" value="1"/>
</dbReference>
<dbReference type="NCBIfam" id="NF003937">
    <property type="entry name" value="PRK05446.1"/>
    <property type="match status" value="1"/>
</dbReference>
<dbReference type="PANTHER" id="PTHR23133:SF2">
    <property type="entry name" value="IMIDAZOLEGLYCEROL-PHOSPHATE DEHYDRATASE"/>
    <property type="match status" value="1"/>
</dbReference>
<dbReference type="PANTHER" id="PTHR23133">
    <property type="entry name" value="IMIDAZOLEGLYCEROL-PHOSPHATE DEHYDRATASE HIS7"/>
    <property type="match status" value="1"/>
</dbReference>
<dbReference type="Pfam" id="PF13242">
    <property type="entry name" value="Hydrolase_like"/>
    <property type="match status" value="1"/>
</dbReference>
<dbReference type="Pfam" id="PF00475">
    <property type="entry name" value="IGPD"/>
    <property type="match status" value="1"/>
</dbReference>
<dbReference type="SUPFAM" id="SSF56784">
    <property type="entry name" value="HAD-like"/>
    <property type="match status" value="1"/>
</dbReference>
<dbReference type="SUPFAM" id="SSF54211">
    <property type="entry name" value="Ribosomal protein S5 domain 2-like"/>
    <property type="match status" value="2"/>
</dbReference>
<dbReference type="PROSITE" id="PS00954">
    <property type="entry name" value="IGP_DEHYDRATASE_1"/>
    <property type="match status" value="1"/>
</dbReference>
<dbReference type="PROSITE" id="PS00955">
    <property type="entry name" value="IGP_DEHYDRATASE_2"/>
    <property type="match status" value="1"/>
</dbReference>
<name>HIS7_XANOP</name>
<reference key="1">
    <citation type="journal article" date="2008" name="BMC Genomics">
        <title>Genome sequence and rapid evolution of the rice pathogen Xanthomonas oryzae pv. oryzae PXO99A.</title>
        <authorList>
            <person name="Salzberg S.L."/>
            <person name="Sommer D.D."/>
            <person name="Schatz M.C."/>
            <person name="Phillippy A.M."/>
            <person name="Rabinowicz P.D."/>
            <person name="Tsuge S."/>
            <person name="Furutani A."/>
            <person name="Ochiai H."/>
            <person name="Delcher A.L."/>
            <person name="Kelley D."/>
            <person name="Madupu R."/>
            <person name="Puiu D."/>
            <person name="Radune D."/>
            <person name="Shumway M."/>
            <person name="Trapnell C."/>
            <person name="Aparna G."/>
            <person name="Jha G."/>
            <person name="Pandey A."/>
            <person name="Patil P.B."/>
            <person name="Ishihara H."/>
            <person name="Meyer D.F."/>
            <person name="Szurek B."/>
            <person name="Verdier V."/>
            <person name="Koebnik R."/>
            <person name="Dow J.M."/>
            <person name="Ryan R.P."/>
            <person name="Hirata H."/>
            <person name="Tsuyumu S."/>
            <person name="Won Lee S."/>
            <person name="Seo Y.-S."/>
            <person name="Sriariyanum M."/>
            <person name="Ronald P.C."/>
            <person name="Sonti R.V."/>
            <person name="Van Sluys M.-A."/>
            <person name="Leach J.E."/>
            <person name="White F.F."/>
            <person name="Bogdanove A.J."/>
        </authorList>
    </citation>
    <scope>NUCLEOTIDE SEQUENCE [LARGE SCALE GENOMIC DNA]</scope>
    <source>
        <strain>PXO99A</strain>
    </source>
</reference>
<keyword id="KW-0028">Amino-acid biosynthesis</keyword>
<keyword id="KW-0963">Cytoplasm</keyword>
<keyword id="KW-0368">Histidine biosynthesis</keyword>
<keyword id="KW-0378">Hydrolase</keyword>
<keyword id="KW-0456">Lyase</keyword>
<keyword id="KW-0460">Magnesium</keyword>
<keyword id="KW-0479">Metal-binding</keyword>
<keyword id="KW-0511">Multifunctional enzyme</keyword>